<dbReference type="EMBL" id="CP001113">
    <property type="protein sequence ID" value="ACF62548.1"/>
    <property type="molecule type" value="Genomic_DNA"/>
</dbReference>
<dbReference type="RefSeq" id="WP_001138042.1">
    <property type="nucleotide sequence ID" value="NZ_CCMR01000004.1"/>
</dbReference>
<dbReference type="SMR" id="B4SUU7"/>
<dbReference type="GeneID" id="92804583"/>
<dbReference type="KEGG" id="see:SNSL254_A3717"/>
<dbReference type="HOGENOM" id="CLU_072226_1_1_6"/>
<dbReference type="Proteomes" id="UP000008824">
    <property type="component" value="Chromosome"/>
</dbReference>
<dbReference type="GO" id="GO:0015935">
    <property type="term" value="C:small ribosomal subunit"/>
    <property type="evidence" value="ECO:0007669"/>
    <property type="project" value="InterPro"/>
</dbReference>
<dbReference type="GO" id="GO:0019843">
    <property type="term" value="F:rRNA binding"/>
    <property type="evidence" value="ECO:0007669"/>
    <property type="project" value="UniProtKB-UniRule"/>
</dbReference>
<dbReference type="GO" id="GO:0003735">
    <property type="term" value="F:structural constituent of ribosome"/>
    <property type="evidence" value="ECO:0007669"/>
    <property type="project" value="InterPro"/>
</dbReference>
<dbReference type="GO" id="GO:0000049">
    <property type="term" value="F:tRNA binding"/>
    <property type="evidence" value="ECO:0007669"/>
    <property type="project" value="UniProtKB-UniRule"/>
</dbReference>
<dbReference type="GO" id="GO:0006412">
    <property type="term" value="P:translation"/>
    <property type="evidence" value="ECO:0007669"/>
    <property type="project" value="UniProtKB-UniRule"/>
</dbReference>
<dbReference type="CDD" id="cd14869">
    <property type="entry name" value="uS7_Bacteria"/>
    <property type="match status" value="1"/>
</dbReference>
<dbReference type="FunFam" id="1.10.455.10:FF:000001">
    <property type="entry name" value="30S ribosomal protein S7"/>
    <property type="match status" value="1"/>
</dbReference>
<dbReference type="Gene3D" id="1.10.455.10">
    <property type="entry name" value="Ribosomal protein S7 domain"/>
    <property type="match status" value="1"/>
</dbReference>
<dbReference type="HAMAP" id="MF_00480_B">
    <property type="entry name" value="Ribosomal_uS7_B"/>
    <property type="match status" value="1"/>
</dbReference>
<dbReference type="InterPro" id="IPR000235">
    <property type="entry name" value="Ribosomal_uS7"/>
</dbReference>
<dbReference type="InterPro" id="IPR005717">
    <property type="entry name" value="Ribosomal_uS7_bac/org-type"/>
</dbReference>
<dbReference type="InterPro" id="IPR020606">
    <property type="entry name" value="Ribosomal_uS7_CS"/>
</dbReference>
<dbReference type="InterPro" id="IPR023798">
    <property type="entry name" value="Ribosomal_uS7_dom"/>
</dbReference>
<dbReference type="InterPro" id="IPR036823">
    <property type="entry name" value="Ribosomal_uS7_dom_sf"/>
</dbReference>
<dbReference type="NCBIfam" id="TIGR01029">
    <property type="entry name" value="rpsG_bact"/>
    <property type="match status" value="1"/>
</dbReference>
<dbReference type="PANTHER" id="PTHR11205">
    <property type="entry name" value="RIBOSOMAL PROTEIN S7"/>
    <property type="match status" value="1"/>
</dbReference>
<dbReference type="Pfam" id="PF00177">
    <property type="entry name" value="Ribosomal_S7"/>
    <property type="match status" value="1"/>
</dbReference>
<dbReference type="PIRSF" id="PIRSF002122">
    <property type="entry name" value="RPS7p_RPS7a_RPS5e_RPS7o"/>
    <property type="match status" value="1"/>
</dbReference>
<dbReference type="SUPFAM" id="SSF47973">
    <property type="entry name" value="Ribosomal protein S7"/>
    <property type="match status" value="1"/>
</dbReference>
<dbReference type="PROSITE" id="PS00052">
    <property type="entry name" value="RIBOSOMAL_S7"/>
    <property type="match status" value="1"/>
</dbReference>
<proteinExistence type="inferred from homology"/>
<keyword id="KW-0687">Ribonucleoprotein</keyword>
<keyword id="KW-0689">Ribosomal protein</keyword>
<keyword id="KW-0694">RNA-binding</keyword>
<keyword id="KW-0699">rRNA-binding</keyword>
<keyword id="KW-0820">tRNA-binding</keyword>
<gene>
    <name evidence="1" type="primary">rpsG</name>
    <name type="ordered locus">SNSL254_A3717</name>
</gene>
<name>RS7_SALNS</name>
<evidence type="ECO:0000255" key="1">
    <source>
        <dbReference type="HAMAP-Rule" id="MF_00480"/>
    </source>
</evidence>
<evidence type="ECO:0000305" key="2"/>
<organism>
    <name type="scientific">Salmonella newport (strain SL254)</name>
    <dbReference type="NCBI Taxonomy" id="423368"/>
    <lineage>
        <taxon>Bacteria</taxon>
        <taxon>Pseudomonadati</taxon>
        <taxon>Pseudomonadota</taxon>
        <taxon>Gammaproteobacteria</taxon>
        <taxon>Enterobacterales</taxon>
        <taxon>Enterobacteriaceae</taxon>
        <taxon>Salmonella</taxon>
    </lineage>
</organism>
<comment type="function">
    <text evidence="1">One of the primary rRNA binding proteins, it binds directly to 16S rRNA where it nucleates assembly of the head domain of the 30S subunit. Is located at the subunit interface close to the decoding center, probably blocks exit of the E-site tRNA.</text>
</comment>
<comment type="subunit">
    <text evidence="1">Part of the 30S ribosomal subunit. Contacts proteins S9 and S11.</text>
</comment>
<comment type="similarity">
    <text evidence="1">Belongs to the universal ribosomal protein uS7 family.</text>
</comment>
<protein>
    <recommendedName>
        <fullName evidence="1">Small ribosomal subunit protein uS7</fullName>
    </recommendedName>
    <alternativeName>
        <fullName evidence="2">30S ribosomal protein S7</fullName>
    </alternativeName>
</protein>
<sequence length="156" mass="17590">MPRRRVIGQRKILPDPKFGSELLAKFVNILMVDGKKSTAESIVYSALETLAQRSGKSELEAFEVALENVRPTVEVKSRRVGGSTYQVPVEVRPVRRNALAMRWIVEAARKRGDKSMALRLANELSDAADNKGTAVKKREDVHRMAEANKAFAHYRW</sequence>
<reference key="1">
    <citation type="journal article" date="2011" name="J. Bacteriol.">
        <title>Comparative genomics of 28 Salmonella enterica isolates: evidence for CRISPR-mediated adaptive sublineage evolution.</title>
        <authorList>
            <person name="Fricke W.F."/>
            <person name="Mammel M.K."/>
            <person name="McDermott P.F."/>
            <person name="Tartera C."/>
            <person name="White D.G."/>
            <person name="Leclerc J.E."/>
            <person name="Ravel J."/>
            <person name="Cebula T.A."/>
        </authorList>
    </citation>
    <scope>NUCLEOTIDE SEQUENCE [LARGE SCALE GENOMIC DNA]</scope>
    <source>
        <strain>SL254</strain>
    </source>
</reference>
<feature type="chain" id="PRO_1000125998" description="Small ribosomal subunit protein uS7">
    <location>
        <begin position="1"/>
        <end position="156"/>
    </location>
</feature>
<accession>B4SUU7</accession>